<dbReference type="EMBL" id="CP001033">
    <property type="protein sequence ID" value="ACB91433.1"/>
    <property type="status" value="ALT_INIT"/>
    <property type="molecule type" value="Genomic_DNA"/>
</dbReference>
<dbReference type="RefSeq" id="WP_000268472.1">
    <property type="nucleotide sequence ID" value="NC_010582.1"/>
</dbReference>
<dbReference type="SMR" id="B2INN2"/>
<dbReference type="KEGG" id="spw:SPCG_2181"/>
<dbReference type="HOGENOM" id="CLU_040318_1_2_9"/>
<dbReference type="GO" id="GO:0022627">
    <property type="term" value="C:cytosolic small ribosomal subunit"/>
    <property type="evidence" value="ECO:0007669"/>
    <property type="project" value="TreeGrafter"/>
</dbReference>
<dbReference type="GO" id="GO:0003735">
    <property type="term" value="F:structural constituent of ribosome"/>
    <property type="evidence" value="ECO:0007669"/>
    <property type="project" value="InterPro"/>
</dbReference>
<dbReference type="GO" id="GO:0006412">
    <property type="term" value="P:translation"/>
    <property type="evidence" value="ECO:0007669"/>
    <property type="project" value="UniProtKB-UniRule"/>
</dbReference>
<dbReference type="CDD" id="cd01425">
    <property type="entry name" value="RPS2"/>
    <property type="match status" value="1"/>
</dbReference>
<dbReference type="FunFam" id="1.10.287.610:FF:000001">
    <property type="entry name" value="30S ribosomal protein S2"/>
    <property type="match status" value="1"/>
</dbReference>
<dbReference type="Gene3D" id="3.40.50.10490">
    <property type="entry name" value="Glucose-6-phosphate isomerase like protein, domain 1"/>
    <property type="match status" value="1"/>
</dbReference>
<dbReference type="Gene3D" id="1.10.287.610">
    <property type="entry name" value="Helix hairpin bin"/>
    <property type="match status" value="1"/>
</dbReference>
<dbReference type="HAMAP" id="MF_00291_B">
    <property type="entry name" value="Ribosomal_uS2_B"/>
    <property type="match status" value="1"/>
</dbReference>
<dbReference type="InterPro" id="IPR001865">
    <property type="entry name" value="Ribosomal_uS2"/>
</dbReference>
<dbReference type="InterPro" id="IPR005706">
    <property type="entry name" value="Ribosomal_uS2_bac/mit/plastid"/>
</dbReference>
<dbReference type="InterPro" id="IPR018130">
    <property type="entry name" value="Ribosomal_uS2_CS"/>
</dbReference>
<dbReference type="InterPro" id="IPR023591">
    <property type="entry name" value="Ribosomal_uS2_flav_dom_sf"/>
</dbReference>
<dbReference type="NCBIfam" id="TIGR01011">
    <property type="entry name" value="rpsB_bact"/>
    <property type="match status" value="1"/>
</dbReference>
<dbReference type="PANTHER" id="PTHR12534">
    <property type="entry name" value="30S RIBOSOMAL PROTEIN S2 PROKARYOTIC AND ORGANELLAR"/>
    <property type="match status" value="1"/>
</dbReference>
<dbReference type="PANTHER" id="PTHR12534:SF0">
    <property type="entry name" value="SMALL RIBOSOMAL SUBUNIT PROTEIN US2M"/>
    <property type="match status" value="1"/>
</dbReference>
<dbReference type="Pfam" id="PF00318">
    <property type="entry name" value="Ribosomal_S2"/>
    <property type="match status" value="1"/>
</dbReference>
<dbReference type="PRINTS" id="PR00395">
    <property type="entry name" value="RIBOSOMALS2"/>
</dbReference>
<dbReference type="SUPFAM" id="SSF52313">
    <property type="entry name" value="Ribosomal protein S2"/>
    <property type="match status" value="1"/>
</dbReference>
<dbReference type="PROSITE" id="PS00962">
    <property type="entry name" value="RIBOSOMAL_S2_1"/>
    <property type="match status" value="1"/>
</dbReference>
<reference key="1">
    <citation type="journal article" date="2009" name="BMC Genomics">
        <title>Genome evolution driven by host adaptations results in a more virulent and antimicrobial-resistant Streptococcus pneumoniae serotype 14.</title>
        <authorList>
            <person name="Ding F."/>
            <person name="Tang P."/>
            <person name="Hsu M.-H."/>
            <person name="Cui P."/>
            <person name="Hu S."/>
            <person name="Yu J."/>
            <person name="Chiu C.-H."/>
        </authorList>
    </citation>
    <scope>NUCLEOTIDE SEQUENCE [LARGE SCALE GENOMIC DNA]</scope>
    <source>
        <strain>CGSP14</strain>
    </source>
</reference>
<comment type="similarity">
    <text evidence="1">Belongs to the universal ribosomal protein uS2 family.</text>
</comment>
<comment type="sequence caution" evidence="2">
    <conflict type="erroneous initiation">
        <sequence resource="EMBL-CDS" id="ACB91433"/>
    </conflict>
</comment>
<sequence length="259" mass="28871">MAVISMKQLLEAGVHFGHQTRRWNPKMAKYIFTERNGIHVIDLQQTVKYADQAYDFMRDAAANDAVVLFVGTKKQAADAVAEEAVRSGQYFINHRWLGGTLTNWGTIQKRIARLKEIKRMEEDGTFEVLPKKEVALLNKQRTRLEKFLGGIEDMPRIPDVMYVVDPHKEQIAVKEAKKLGIPVVAMVDTNTDPDDIDVIIPANDDAIRAVKLITAKLADAIIEGRQGEDAVAVEAEFAASETQADSIEEIVEVVEGDNA</sequence>
<organism>
    <name type="scientific">Streptococcus pneumoniae (strain CGSP14)</name>
    <dbReference type="NCBI Taxonomy" id="516950"/>
    <lineage>
        <taxon>Bacteria</taxon>
        <taxon>Bacillati</taxon>
        <taxon>Bacillota</taxon>
        <taxon>Bacilli</taxon>
        <taxon>Lactobacillales</taxon>
        <taxon>Streptococcaceae</taxon>
        <taxon>Streptococcus</taxon>
    </lineage>
</organism>
<accession>B2INN2</accession>
<name>RS2_STRPS</name>
<protein>
    <recommendedName>
        <fullName evidence="1">Small ribosomal subunit protein uS2</fullName>
    </recommendedName>
    <alternativeName>
        <fullName evidence="2">30S ribosomal protein S2</fullName>
    </alternativeName>
</protein>
<feature type="chain" id="PRO_0000352040" description="Small ribosomal subunit protein uS2">
    <location>
        <begin position="1"/>
        <end position="259"/>
    </location>
</feature>
<evidence type="ECO:0000255" key="1">
    <source>
        <dbReference type="HAMAP-Rule" id="MF_00291"/>
    </source>
</evidence>
<evidence type="ECO:0000305" key="2"/>
<keyword id="KW-0687">Ribonucleoprotein</keyword>
<keyword id="KW-0689">Ribosomal protein</keyword>
<gene>
    <name evidence="1" type="primary">rpsB</name>
    <name type="ordered locus">SPCG_2181</name>
</gene>
<proteinExistence type="inferred from homology"/>